<name>SPAS_BACIU</name>
<protein>
    <recommendedName>
        <fullName>Lantibiotic subtilin</fullName>
    </recommendedName>
</protein>
<feature type="propeptide" id="PRO_0000017142" evidence="4">
    <location>
        <begin position="1"/>
        <end position="24"/>
    </location>
</feature>
<feature type="peptide" id="PRO_0000017143" description="Lantibiotic subtilin">
    <location>
        <begin position="25"/>
        <end position="56"/>
    </location>
</feature>
<feature type="modified residue" description="N2-succinyltryptophan; partial" evidence="6">
    <location>
        <position position="25"/>
    </location>
</feature>
<feature type="modified residue" description="2,3-didehydroalanine (Ser)" evidence="3">
    <location>
        <position position="29"/>
    </location>
</feature>
<feature type="modified residue" description="(Z)-2,3-didehydrobutyrine" evidence="3">
    <location>
        <position position="42"/>
    </location>
</feature>
<feature type="modified residue" description="2,3-didehydroalanine (Ser)" evidence="3">
    <location>
        <position position="55"/>
    </location>
</feature>
<feature type="cross-link" description="Lanthionine (Ser-Cys)" evidence="1 3">
    <location>
        <begin position="27"/>
        <end position="31"/>
    </location>
</feature>
<feature type="cross-link" description="Beta-methyllanthionine (Thr-Cys)" evidence="1 3">
    <location>
        <begin position="32"/>
        <end position="35"/>
    </location>
</feature>
<feature type="cross-link" description="Beta-methyllanthionine (Thr-Cys)" evidence="1 3">
    <location>
        <begin position="37"/>
        <end position="43"/>
    </location>
</feature>
<feature type="cross-link" description="Beta-methyllanthionine (Thr-Cys)" evidence="1 3">
    <location>
        <begin position="47"/>
        <end position="50"/>
    </location>
</feature>
<feature type="cross-link" description="Beta-methyllanthionine (Thr-Cys)" evidence="1 3">
    <location>
        <begin position="49"/>
        <end position="52"/>
    </location>
</feature>
<feature type="mutagenesis site" description="Devoid of antimicrobial activity; keeps full lysis capacity." evidence="5">
    <original>S</original>
    <variation>A</variation>
    <location>
        <position position="29"/>
    </location>
</feature>
<comment type="function">
    <text evidence="2">Lanthionine-containing peptide antibiotic (lantibiotic) active on Gram-positive bacteria. The bactericidal activity of lantibiotics is based on depolarization of energized bacterial cytoplasmic membranes, initiated by the formation of aqueous transmembrane pores.</text>
</comment>
<comment type="PTM">
    <text evidence="3">Maturation of lantibiotics involves the enzymatic conversion of Thr, and Ser into dehydrated AA and the formation of thioether bonds with cysteine. This is followed by membrane translocation and cleavage of the modified precursor.</text>
</comment>
<comment type="PTM">
    <text evidence="6">Succinylated subtilin is 10-20 times less active than subtilin. The ratio subtilin/succinylated subtilin is about 1:2 after 24 hours growth.</text>
</comment>
<comment type="PTM">
    <text evidence="1">The 2,3-didehydrobutyrine is determined to be the Z-isomer.</text>
</comment>
<comment type="miscellaneous">
    <text>Subtilin activity is observed during stationary phase, but not during exponential growth.</text>
</comment>
<comment type="similarity">
    <text evidence="7">Belongs to the type A lantibiotic family.</text>
</comment>
<accession>P10946</accession>
<proteinExistence type="evidence at protein level"/>
<sequence>MSKFDDFDLDVVKVSKQDSKITPQWKSESLCTPGCVTGALQTCFLQTLTCNCKISK</sequence>
<reference key="1">
    <citation type="journal article" date="1988" name="J. Biol. Chem.">
        <title>Structure and expression of a gene encoding the precursor of subtilin, a small protein antibiotic.</title>
        <authorList>
            <person name="Banerjee S."/>
            <person name="Hansen J.N."/>
        </authorList>
    </citation>
    <scope>NUCLEOTIDE SEQUENCE [GENOMIC DNA]</scope>
    <scope>DEHYDRATION AT SER-29; THR-42 AND SER-55</scope>
    <scope>LANTHIONINE CROSS-LINKS</scope>
</reference>
<reference key="2">
    <citation type="journal article" date="1992" name="J. Bacteriol.">
        <title>The subtilin gene of Bacillus subtilis ATCC 6633 is encoded in an operon that contains a homolog of the hemolysin B transport protein.</title>
        <authorList>
            <person name="Chung Y.J."/>
            <person name="Steen M.T."/>
            <person name="Hansen J.N."/>
        </authorList>
    </citation>
    <scope>NUCLEOTIDE SEQUENCE [GENOMIC DNA]</scope>
    <source>
        <strain>ATCC 6633 / PCI 219 / NRS 231</strain>
    </source>
</reference>
<reference key="3">
    <citation type="journal article" date="1992" name="Appl. Environ. Microbiol.">
        <title>Analysis of genes involved in biosynthesis of the lantibiotic subtilin.</title>
        <authorList>
            <person name="Klein C."/>
            <person name="Kaletta C."/>
            <person name="Schnell N."/>
            <person name="Entian K.-D."/>
        </authorList>
    </citation>
    <scope>NUCLEOTIDE SEQUENCE [GENOMIC DNA]</scope>
    <source>
        <strain>ATCC 6633 / PCI 219 / NRS 231</strain>
    </source>
</reference>
<reference key="4">
    <citation type="journal article" date="1992" name="J. Bacteriol.">
        <title>Determination of the sequence of spaE and identification of a promoter in the subtilin (spa) operon in Bacillus subtilis.</title>
        <authorList>
            <person name="Chung Y.J."/>
            <person name="Hansen J.N."/>
        </authorList>
    </citation>
    <scope>NUCLEOTIDE SEQUENCE [GENOMIC DNA]</scope>
</reference>
<reference key="5">
    <citation type="journal article" date="1994" name="Appl. Environ. Microbiol.">
        <title>Genes involved in self-protection against the lantibiotic subtilin produced by Bacillus subtilis ATCC 6633.</title>
        <authorList>
            <person name="Klein C."/>
            <person name="Entian K.-D."/>
        </authorList>
    </citation>
    <scope>NUCLEOTIDE SEQUENCE [GENOMIC DNA]</scope>
</reference>
<reference key="6">
    <citation type="journal article" date="1973" name="Hoppe-Seyler's Z. Physiol. Chem.">
        <title>Subtilin, VI: the structure of subtilin.</title>
        <authorList>
            <person name="Gross E."/>
            <person name="Kiltz H.H."/>
            <person name="Nebelin E."/>
        </authorList>
    </citation>
    <scope>PROTEIN SEQUENCE OF 25-56</scope>
</reference>
<reference key="7">
    <citation type="journal article" date="1989" name="Eur. J. Biochem.">
        <title>The peptide antibiotic subtilin acts by formation of voltage-dependent multi-state pores in bacterial and artificial membranes.</title>
        <authorList>
            <person name="Schueller F."/>
            <person name="Benz R."/>
            <person name="Sahl H.-G."/>
        </authorList>
    </citation>
    <scope>FUNCTION</scope>
    <scope>MODE OF ACTION</scope>
</reference>
<reference key="8">
    <citation type="journal article" date="1993" name="Biochem. J.">
        <title>A novel post-translational modification of the peptide antibiotic subtilin: isolation and characterization of a natural variant from Bacillus subtilis A.T.C.C. 6633.</title>
        <authorList>
            <person name="Chan W.C."/>
            <person name="Bycroft B.W."/>
            <person name="Leyland M.L."/>
            <person name="Lian L.-Y."/>
            <person name="Roberts G.C.K."/>
        </authorList>
    </citation>
    <scope>SUCCINYLATION AT TRP-25</scope>
    <scope>IDENTIFICATION BY MASS SPECTROMETRY</scope>
</reference>
<reference key="9">
    <citation type="journal article" date="1992" name="FEBS Lett.">
        <title>Sequence-specific resonance assignment and conformational analysis of subtilin by 2D NMR.</title>
        <authorList>
            <person name="Chan W.C."/>
            <person name="Bycroft B.W."/>
            <person name="Leylands M.L."/>
            <person name="Lian L.-Y."/>
            <person name="Yang J.C."/>
            <person name="Roberts G.C.K."/>
        </authorList>
    </citation>
    <scope>STRUCTURE BY NMR</scope>
    <scope>LANTHIONINE CROSS-LINKS</scope>
    <source>
        <strain>ATCC 6633 / PCI 219 / NRS 231</strain>
    </source>
</reference>
<reference key="10">
    <citation type="journal article" date="1993" name="Appl. Environ. Microbiol.">
        <title>The antimicrobial effect of a structural variant of subtilin against outgrowing Bacillus cereus T spores and vegetative cells occurs by different mechanisms.</title>
        <authorList>
            <person name="Liu W."/>
            <person name="Hansen J.N."/>
        </authorList>
    </citation>
    <scope>MUTAGENESIS OF SER-29</scope>
</reference>
<dbReference type="EMBL" id="J03767">
    <property type="protein sequence ID" value="AAA22841.1"/>
    <property type="molecule type" value="Genomic_DNA"/>
</dbReference>
<dbReference type="EMBL" id="M83944">
    <property type="protein sequence ID" value="AAA22772.1"/>
    <property type="molecule type" value="Genomic_DNA"/>
</dbReference>
<dbReference type="EMBL" id="M86869">
    <property type="protein sequence ID" value="AAA22840.1"/>
    <property type="molecule type" value="Genomic_DNA"/>
</dbReference>
<dbReference type="EMBL" id="M99263">
    <property type="protein sequence ID" value="AAA22778.1"/>
    <property type="molecule type" value="Genomic_DNA"/>
</dbReference>
<dbReference type="EMBL" id="U09819">
    <property type="protein sequence ID" value="AAB91589.1"/>
    <property type="molecule type" value="Genomic_DNA"/>
</dbReference>
<dbReference type="PIR" id="A28112">
    <property type="entry name" value="NIBSSA"/>
</dbReference>
<dbReference type="SMR" id="P10946"/>
<dbReference type="TCDB" id="1.C.20.1.5">
    <property type="family name" value="the nisin (nisin) family"/>
</dbReference>
<dbReference type="GO" id="GO:0005576">
    <property type="term" value="C:extracellular region"/>
    <property type="evidence" value="ECO:0007669"/>
    <property type="project" value="InterPro"/>
</dbReference>
<dbReference type="GO" id="GO:0005102">
    <property type="term" value="F:signaling receptor binding"/>
    <property type="evidence" value="ECO:0007669"/>
    <property type="project" value="UniProtKB-KW"/>
</dbReference>
<dbReference type="GO" id="GO:0042742">
    <property type="term" value="P:defense response to bacterium"/>
    <property type="evidence" value="ECO:0007669"/>
    <property type="project" value="UniProtKB-KW"/>
</dbReference>
<dbReference type="GO" id="GO:0031640">
    <property type="term" value="P:killing of cells of another organism"/>
    <property type="evidence" value="ECO:0007669"/>
    <property type="project" value="UniProtKB-KW"/>
</dbReference>
<dbReference type="InterPro" id="IPR006079">
    <property type="entry name" value="Lantibiotic_typ-A_Bacillales"/>
</dbReference>
<dbReference type="NCBIfam" id="TIGR03731">
    <property type="entry name" value="lantibio_gallid"/>
    <property type="match status" value="1"/>
</dbReference>
<dbReference type="Pfam" id="PF02052">
    <property type="entry name" value="Gallidermin"/>
    <property type="match status" value="1"/>
</dbReference>
<dbReference type="PRINTS" id="PR00324">
    <property type="entry name" value="NISIN"/>
</dbReference>
<organism>
    <name type="scientific">Bacillus subtilis</name>
    <dbReference type="NCBI Taxonomy" id="1423"/>
    <lineage>
        <taxon>Bacteria</taxon>
        <taxon>Bacillati</taxon>
        <taxon>Bacillota</taxon>
        <taxon>Bacilli</taxon>
        <taxon>Bacillales</taxon>
        <taxon>Bacillaceae</taxon>
        <taxon>Bacillus</taxon>
    </lineage>
</organism>
<gene>
    <name type="primary">spaS</name>
    <name type="synonym">sub</name>
</gene>
<evidence type="ECO:0000269" key="1">
    <source>
    </source>
</evidence>
<evidence type="ECO:0000269" key="2">
    <source>
    </source>
</evidence>
<evidence type="ECO:0000269" key="3">
    <source>
    </source>
</evidence>
<evidence type="ECO:0000269" key="4">
    <source>
    </source>
</evidence>
<evidence type="ECO:0000269" key="5">
    <source>
    </source>
</evidence>
<evidence type="ECO:0000269" key="6">
    <source>
    </source>
</evidence>
<evidence type="ECO:0000305" key="7"/>
<keyword id="KW-0044">Antibiotic</keyword>
<keyword id="KW-0929">Antimicrobial</keyword>
<keyword id="KW-0078">Bacteriocin</keyword>
<keyword id="KW-0903">Direct protein sequencing</keyword>
<keyword id="KW-0425">Lantibiotic</keyword>
<keyword id="KW-0883">Thioether bond</keyword>